<proteinExistence type="evidence at transcript level"/>
<sequence>MNSRFTSAFTPFAVSLGLLLVMTSAFPTPGPLGEDFKNDTTPGRLLLTTPEKTEALIKRMVDKISAMRKEICEKNDECESSKETLAENKLNLPKMEEKDGCFQSGFNQAICLIRTTAGLLEYQIYLDYLQNEYEGNQENVRDLRKNIRTLIQILKQKIADLITTPATNTDLLEKMQSSNEWVKNAKIILILRNLENFLQFSLRAIRMK</sequence>
<comment type="function">
    <text evidence="2">Cytokine with a wide variety of biological functions in immunity, tissue regeneration, and metabolism. Binds to IL6R, then the complex associates to the signaling subunit IL6ST/gp130 to trigger the intracellular IL6-signaling pathway. The interaction with the membrane-bound IL6R and IL6ST stimulates 'classic signaling', whereas the binding of IL6 and soluble IL6R to IL6ST stimulates 'trans-signaling'. Alternatively, 'cluster signaling' occurs when membrane-bound IL6:IL6R complexes on transmitter cells activate IL6ST receptors on neighboring receiver cells.</text>
</comment>
<comment type="function">
    <text evidence="2 3">IL6 is a potent inducer of the acute phase response. Rapid production of IL6 contributes to host defense during infection and tissue injury, but excessive IL6 synthesis is involved in disease pathology. In the innate immune response, is synthesized by myeloid cells, such as macrophages and dendritic cells, upon recognition of pathogens through toll-like receptors (TLRs) at the site of infection or tissue injury (By similarity). In the adaptive immune response, is required for the differentiation of B cells into immunoglobulin-secreting cells. Plays a major role in the differentiation of CD4(+) T cell subsets. Essential factor for the development of T follicular helper (Tfh) cells that are required for the induction of germinal-center formation. Required to drive naive CD4(+) T cells to the Th17 lineage. Also required for proliferation of myeloma cells and the survival of plasmablast cells (By similarity).</text>
</comment>
<comment type="function">
    <text evidence="2 3">Acts as an essential factor in bone homeostasis and on vessels directly or indirectly by induction of VEGF, resulting in increased angiogenesis activity and vascular permeability. Induces, through 'trans-signaling' and synergistically with IL1B and TNF, the production of VEGF. Involved in metabolic controls, is discharged into the bloodstream after muscle contraction increasing lipolysis and improving insulin resistance (By similarity). 'Trans-signaling' in central nervous system also regulates energy and glucose homeostasis. Mediates, through GLP-1, crosstalk between insulin-sensitive tissues, intestinal L cells and pancreatic islets to adapt to changes in insulin demand (By similarity). Also acts as a myokine (By similarity). Plays a protective role during liver injury, being required for maintenance of tissue regeneration (By similarity). Also has a pivotal role in iron metabolism by regulating HAMP/hepcidin expression upon inflammation or bacterial infection (By similarity). Through activation of IL6ST-YAP-NOTCH pathway, induces inflammation-induced epithelial regeneration (By similarity).</text>
</comment>
<comment type="subunit">
    <text evidence="2">Component of a hexamer of two molecules each of IL6, IL6R and IL6ST; first binds to IL6R to associate with the signaling subunit IL6ST. Interacts with IL6R (via the N-terminal ectodomain); this interaction may be affected by IL6R-binding with SORL1, hence decreasing IL6 cis signaling. Interacts with SORL1 (via the N-terminal ectodomain); this interaction leads to IL6 internalization and lysosomal degradation. May form a trimeric complex with the soluble SORL1 ectodomain and soluble IL6R receptor; this interaction might stabilize circulating IL6, hence promoting IL6 trans signaling.</text>
</comment>
<comment type="subcellular location">
    <subcellularLocation>
        <location evidence="2">Secreted</location>
    </subcellularLocation>
</comment>
<comment type="similarity">
    <text evidence="5">Belongs to the IL-6 superfamily.</text>
</comment>
<dbReference type="EMBL" id="X57317">
    <property type="protein sequence ID" value="CAA40572.1"/>
    <property type="molecule type" value="mRNA"/>
</dbReference>
<dbReference type="EMBL" id="EU276071">
    <property type="protein sequence ID" value="ABX72069.1"/>
    <property type="molecule type" value="mRNA"/>
</dbReference>
<dbReference type="EMBL" id="BC123577">
    <property type="protein sequence ID" value="AAI23578.1"/>
    <property type="molecule type" value="mRNA"/>
</dbReference>
<dbReference type="PIR" id="A56610">
    <property type="entry name" value="A56610"/>
</dbReference>
<dbReference type="RefSeq" id="NP_776348.1">
    <property type="nucleotide sequence ID" value="NM_173923.2"/>
</dbReference>
<dbReference type="SMR" id="P26892"/>
<dbReference type="FunCoup" id="P26892">
    <property type="interactions" value="529"/>
</dbReference>
<dbReference type="STRING" id="9913.ENSBTAP00000019865"/>
<dbReference type="GlyCosmos" id="P26892">
    <property type="glycosylation" value="1 site, No reported glycans"/>
</dbReference>
<dbReference type="GlyGen" id="P26892">
    <property type="glycosylation" value="1 site"/>
</dbReference>
<dbReference type="PaxDb" id="9913-ENSBTAP00000019865"/>
<dbReference type="Ensembl" id="ENSBTAT00000019865.6">
    <property type="protein sequence ID" value="ENSBTAP00000019865.4"/>
    <property type="gene ID" value="ENSBTAG00000014921.6"/>
</dbReference>
<dbReference type="GeneID" id="280826"/>
<dbReference type="KEGG" id="bta:280826"/>
<dbReference type="CTD" id="3569"/>
<dbReference type="VEuPathDB" id="HostDB:ENSBTAG00000014921"/>
<dbReference type="VGNC" id="VGNC:30166">
    <property type="gene designation" value="IL6"/>
</dbReference>
<dbReference type="eggNOG" id="ENOG502S7Q4">
    <property type="taxonomic scope" value="Eukaryota"/>
</dbReference>
<dbReference type="GeneTree" id="ENSGT00390000000878"/>
<dbReference type="HOGENOM" id="CLU_096521_0_0_1"/>
<dbReference type="InParanoid" id="P26892"/>
<dbReference type="OMA" id="FSKCENS"/>
<dbReference type="OrthoDB" id="8943569at2759"/>
<dbReference type="TreeFam" id="TF335984"/>
<dbReference type="Reactome" id="R-BTA-1059683">
    <property type="pathway name" value="Interleukin-6 signaling"/>
</dbReference>
<dbReference type="Reactome" id="R-BTA-110056">
    <property type="pathway name" value="MAPK3 (ERK1) activation"/>
</dbReference>
<dbReference type="Reactome" id="R-BTA-112411">
    <property type="pathway name" value="MAPK1 (ERK2) activation"/>
</dbReference>
<dbReference type="Reactome" id="R-BTA-381426">
    <property type="pathway name" value="Regulation of Insulin-like Growth Factor (IGF) transport and uptake by Insulin-like Growth Factor Binding Proteins (IGFBPs)"/>
</dbReference>
<dbReference type="Reactome" id="R-BTA-8957275">
    <property type="pathway name" value="Post-translational protein phosphorylation"/>
</dbReference>
<dbReference type="Proteomes" id="UP000009136">
    <property type="component" value="Chromosome 4"/>
</dbReference>
<dbReference type="Bgee" id="ENSBTAG00000014921">
    <property type="expression patterns" value="Expressed in ureter and 59 other cell types or tissues"/>
</dbReference>
<dbReference type="GO" id="GO:0005615">
    <property type="term" value="C:extracellular space"/>
    <property type="evidence" value="ECO:0000318"/>
    <property type="project" value="GO_Central"/>
</dbReference>
<dbReference type="GO" id="GO:0005896">
    <property type="term" value="C:interleukin-6 receptor complex"/>
    <property type="evidence" value="ECO:0000318"/>
    <property type="project" value="GO_Central"/>
</dbReference>
<dbReference type="GO" id="GO:0005125">
    <property type="term" value="F:cytokine activity"/>
    <property type="evidence" value="ECO:0000318"/>
    <property type="project" value="GO_Central"/>
</dbReference>
<dbReference type="GO" id="GO:0008083">
    <property type="term" value="F:growth factor activity"/>
    <property type="evidence" value="ECO:0000318"/>
    <property type="project" value="GO_Central"/>
</dbReference>
<dbReference type="GO" id="GO:0042802">
    <property type="term" value="F:identical protein binding"/>
    <property type="evidence" value="ECO:0007669"/>
    <property type="project" value="Ensembl"/>
</dbReference>
<dbReference type="GO" id="GO:0005138">
    <property type="term" value="F:interleukin-6 receptor binding"/>
    <property type="evidence" value="ECO:0007669"/>
    <property type="project" value="Ensembl"/>
</dbReference>
<dbReference type="GO" id="GO:0006953">
    <property type="term" value="P:acute-phase response"/>
    <property type="evidence" value="ECO:0007669"/>
    <property type="project" value="UniProtKB-KW"/>
</dbReference>
<dbReference type="GO" id="GO:0007259">
    <property type="term" value="P:cell surface receptor signaling pathway via JAK-STAT"/>
    <property type="evidence" value="ECO:0007669"/>
    <property type="project" value="Ensembl"/>
</dbReference>
<dbReference type="GO" id="GO:0070301">
    <property type="term" value="P:cellular response to hydrogen peroxide"/>
    <property type="evidence" value="ECO:0007669"/>
    <property type="project" value="Ensembl"/>
</dbReference>
<dbReference type="GO" id="GO:0071222">
    <property type="term" value="P:cellular response to lipopolysaccharide"/>
    <property type="evidence" value="ECO:0007669"/>
    <property type="project" value="Ensembl"/>
</dbReference>
<dbReference type="GO" id="GO:0051607">
    <property type="term" value="P:defense response to virus"/>
    <property type="evidence" value="ECO:0007669"/>
    <property type="project" value="Ensembl"/>
</dbReference>
<dbReference type="GO" id="GO:0042593">
    <property type="term" value="P:glucose homeostasis"/>
    <property type="evidence" value="ECO:0000250"/>
    <property type="project" value="UniProtKB"/>
</dbReference>
<dbReference type="GO" id="GO:0002384">
    <property type="term" value="P:hepatic immune response"/>
    <property type="evidence" value="ECO:0007669"/>
    <property type="project" value="Ensembl"/>
</dbReference>
<dbReference type="GO" id="GO:0072574">
    <property type="term" value="P:hepatocyte proliferation"/>
    <property type="evidence" value="ECO:0000250"/>
    <property type="project" value="UniProtKB"/>
</dbReference>
<dbReference type="GO" id="GO:0090594">
    <property type="term" value="P:inflammatory response to wounding"/>
    <property type="evidence" value="ECO:0007669"/>
    <property type="project" value="Ensembl"/>
</dbReference>
<dbReference type="GO" id="GO:0070102">
    <property type="term" value="P:interleukin-6-mediated signaling pathway"/>
    <property type="evidence" value="ECO:0000250"/>
    <property type="project" value="UniProtKB"/>
</dbReference>
<dbReference type="GO" id="GO:0097421">
    <property type="term" value="P:liver regeneration"/>
    <property type="evidence" value="ECO:0000250"/>
    <property type="project" value="UniProtKB"/>
</dbReference>
<dbReference type="GO" id="GO:0043066">
    <property type="term" value="P:negative regulation of apoptotic process"/>
    <property type="evidence" value="ECO:0007669"/>
    <property type="project" value="Ensembl"/>
</dbReference>
<dbReference type="GO" id="GO:0032966">
    <property type="term" value="P:negative regulation of collagen biosynthetic process"/>
    <property type="evidence" value="ECO:0007669"/>
    <property type="project" value="Ensembl"/>
</dbReference>
<dbReference type="GO" id="GO:2000635">
    <property type="term" value="P:negative regulation of primary miRNA processing"/>
    <property type="evidence" value="ECO:0007669"/>
    <property type="project" value="Ensembl"/>
</dbReference>
<dbReference type="GO" id="GO:0031175">
    <property type="term" value="P:neuron projection development"/>
    <property type="evidence" value="ECO:0007669"/>
    <property type="project" value="Ensembl"/>
</dbReference>
<dbReference type="GO" id="GO:0001781">
    <property type="term" value="P:neutrophil apoptotic process"/>
    <property type="evidence" value="ECO:0007669"/>
    <property type="project" value="Ensembl"/>
</dbReference>
<dbReference type="GO" id="GO:0002675">
    <property type="term" value="P:positive regulation of acute inflammatory response"/>
    <property type="evidence" value="ECO:0007669"/>
    <property type="project" value="Ensembl"/>
</dbReference>
<dbReference type="GO" id="GO:1902512">
    <property type="term" value="P:positive regulation of apoptotic DNA fragmentation"/>
    <property type="evidence" value="ECO:0007669"/>
    <property type="project" value="Ensembl"/>
</dbReference>
<dbReference type="GO" id="GO:0043065">
    <property type="term" value="P:positive regulation of apoptotic process"/>
    <property type="evidence" value="ECO:0007669"/>
    <property type="project" value="Ensembl"/>
</dbReference>
<dbReference type="GO" id="GO:0050871">
    <property type="term" value="P:positive regulation of B cell activation"/>
    <property type="evidence" value="ECO:0007669"/>
    <property type="project" value="Ensembl"/>
</dbReference>
<dbReference type="GO" id="GO:0008284">
    <property type="term" value="P:positive regulation of cell population proliferation"/>
    <property type="evidence" value="ECO:0000318"/>
    <property type="project" value="GO_Central"/>
</dbReference>
<dbReference type="GO" id="GO:0032722">
    <property type="term" value="P:positive regulation of chemokine production"/>
    <property type="evidence" value="ECO:0007669"/>
    <property type="project" value="Ensembl"/>
</dbReference>
<dbReference type="GO" id="GO:1900017">
    <property type="term" value="P:positive regulation of cytokine production involved in inflammatory response"/>
    <property type="evidence" value="ECO:0007669"/>
    <property type="project" value="Ensembl"/>
</dbReference>
<dbReference type="GO" id="GO:0010718">
    <property type="term" value="P:positive regulation of epithelial to mesenchymal transition"/>
    <property type="evidence" value="ECO:0007669"/>
    <property type="project" value="Ensembl"/>
</dbReference>
<dbReference type="GO" id="GO:0090091">
    <property type="term" value="P:positive regulation of extracellular matrix disassembly"/>
    <property type="evidence" value="ECO:0007669"/>
    <property type="project" value="Ensembl"/>
</dbReference>
<dbReference type="GO" id="GO:0060252">
    <property type="term" value="P:positive regulation of glial cell proliferation"/>
    <property type="evidence" value="ECO:0007669"/>
    <property type="project" value="Ensembl"/>
</dbReference>
<dbReference type="GO" id="GO:0002639">
    <property type="term" value="P:positive regulation of immunoglobulin production"/>
    <property type="evidence" value="ECO:0007669"/>
    <property type="project" value="Ensembl"/>
</dbReference>
<dbReference type="GO" id="GO:0032731">
    <property type="term" value="P:positive regulation of interleukin-1 beta production"/>
    <property type="evidence" value="ECO:0007669"/>
    <property type="project" value="Ensembl"/>
</dbReference>
<dbReference type="GO" id="GO:0032733">
    <property type="term" value="P:positive regulation of interleukin-10 production"/>
    <property type="evidence" value="ECO:0007669"/>
    <property type="project" value="Ensembl"/>
</dbReference>
<dbReference type="GO" id="GO:0032755">
    <property type="term" value="P:positive regulation of interleukin-6 production"/>
    <property type="evidence" value="ECO:0007669"/>
    <property type="project" value="Ensembl"/>
</dbReference>
<dbReference type="GO" id="GO:0032757">
    <property type="term" value="P:positive regulation of interleukin-8 production"/>
    <property type="evidence" value="ECO:0007669"/>
    <property type="project" value="Ensembl"/>
</dbReference>
<dbReference type="GO" id="GO:1904996">
    <property type="term" value="P:positive regulation of leukocyte adhesion to vascular endothelial cell"/>
    <property type="evidence" value="ECO:0007669"/>
    <property type="project" value="Ensembl"/>
</dbReference>
<dbReference type="GO" id="GO:0043410">
    <property type="term" value="P:positive regulation of MAPK cascade"/>
    <property type="evidence" value="ECO:0007669"/>
    <property type="project" value="Ensembl"/>
</dbReference>
<dbReference type="GO" id="GO:1902895">
    <property type="term" value="P:positive regulation of miRNA transcription"/>
    <property type="evidence" value="ECO:0007669"/>
    <property type="project" value="Ensembl"/>
</dbReference>
<dbReference type="GO" id="GO:1901731">
    <property type="term" value="P:positive regulation of platelet aggregation"/>
    <property type="evidence" value="ECO:0007669"/>
    <property type="project" value="Ensembl"/>
</dbReference>
<dbReference type="GO" id="GO:0046427">
    <property type="term" value="P:positive regulation of receptor signaling pathway via JAK-STAT"/>
    <property type="evidence" value="ECO:0000318"/>
    <property type="project" value="GO_Central"/>
</dbReference>
<dbReference type="GO" id="GO:1904894">
    <property type="term" value="P:positive regulation of receptor signaling pathway via STAT"/>
    <property type="evidence" value="ECO:0000250"/>
    <property type="project" value="UniProtKB"/>
</dbReference>
<dbReference type="GO" id="GO:0048661">
    <property type="term" value="P:positive regulation of smooth muscle cell proliferation"/>
    <property type="evidence" value="ECO:0007669"/>
    <property type="project" value="Ensembl"/>
</dbReference>
<dbReference type="GO" id="GO:0042102">
    <property type="term" value="P:positive regulation of T cell proliferation"/>
    <property type="evidence" value="ECO:0007669"/>
    <property type="project" value="Ensembl"/>
</dbReference>
<dbReference type="GO" id="GO:0045944">
    <property type="term" value="P:positive regulation of transcription by RNA polymerase II"/>
    <property type="evidence" value="ECO:0007669"/>
    <property type="project" value="Ensembl"/>
</dbReference>
<dbReference type="GO" id="GO:0045727">
    <property type="term" value="P:positive regulation of translation"/>
    <property type="evidence" value="ECO:0007669"/>
    <property type="project" value="Ensembl"/>
</dbReference>
<dbReference type="GO" id="GO:0032760">
    <property type="term" value="P:positive regulation of tumor necrosis factor production"/>
    <property type="evidence" value="ECO:0007669"/>
    <property type="project" value="Ensembl"/>
</dbReference>
<dbReference type="GO" id="GO:0010575">
    <property type="term" value="P:positive regulation of vascular endothelial growth factor production"/>
    <property type="evidence" value="ECO:0007669"/>
    <property type="project" value="Ensembl"/>
</dbReference>
<dbReference type="GO" id="GO:0070092">
    <property type="term" value="P:regulation of glucagon secretion"/>
    <property type="evidence" value="ECO:0000250"/>
    <property type="project" value="UniProtKB"/>
</dbReference>
<dbReference type="GO" id="GO:0050796">
    <property type="term" value="P:regulation of insulin secretion"/>
    <property type="evidence" value="ECO:0000250"/>
    <property type="project" value="UniProtKB"/>
</dbReference>
<dbReference type="GO" id="GO:0014823">
    <property type="term" value="P:response to activity"/>
    <property type="evidence" value="ECO:0000250"/>
    <property type="project" value="UniProtKB"/>
</dbReference>
<dbReference type="GO" id="GO:0051384">
    <property type="term" value="P:response to glucocorticoid"/>
    <property type="evidence" value="ECO:0007669"/>
    <property type="project" value="Ensembl"/>
</dbReference>
<dbReference type="GO" id="GO:0072540">
    <property type="term" value="P:T-helper 17 cell lineage commitment"/>
    <property type="evidence" value="ECO:0000250"/>
    <property type="project" value="UniProtKB"/>
</dbReference>
<dbReference type="GO" id="GO:0010573">
    <property type="term" value="P:vascular endothelial growth factor production"/>
    <property type="evidence" value="ECO:0000250"/>
    <property type="project" value="UniProtKB"/>
</dbReference>
<dbReference type="FunFam" id="1.20.1250.10:FF:000006">
    <property type="entry name" value="Interleukin-6"/>
    <property type="match status" value="1"/>
</dbReference>
<dbReference type="Gene3D" id="1.20.1250.10">
    <property type="match status" value="1"/>
</dbReference>
<dbReference type="InterPro" id="IPR009079">
    <property type="entry name" value="4_helix_cytokine-like_core"/>
</dbReference>
<dbReference type="InterPro" id="IPR003574">
    <property type="entry name" value="IL-6-like"/>
</dbReference>
<dbReference type="InterPro" id="IPR030474">
    <property type="entry name" value="IL-6/GCSF/MGF"/>
</dbReference>
<dbReference type="InterPro" id="IPR030473">
    <property type="entry name" value="IL6/GCSF/MGF_CS"/>
</dbReference>
<dbReference type="PANTHER" id="PTHR48494">
    <property type="entry name" value="INTERLEUKIN-6"/>
    <property type="match status" value="1"/>
</dbReference>
<dbReference type="PANTHER" id="PTHR48494:SF1">
    <property type="entry name" value="INTERLEUKIN-6"/>
    <property type="match status" value="1"/>
</dbReference>
<dbReference type="Pfam" id="PF00489">
    <property type="entry name" value="IL6"/>
    <property type="match status" value="1"/>
</dbReference>
<dbReference type="PIRSF" id="PIRSF001935">
    <property type="entry name" value="IL6_MGF_GCSF"/>
    <property type="match status" value="1"/>
</dbReference>
<dbReference type="PRINTS" id="PR00433">
    <property type="entry name" value="IL6GCSFMGF"/>
</dbReference>
<dbReference type="PRINTS" id="PR00434">
    <property type="entry name" value="INTERLEUKIN6"/>
</dbReference>
<dbReference type="SMART" id="SM00126">
    <property type="entry name" value="IL6"/>
    <property type="match status" value="1"/>
</dbReference>
<dbReference type="SUPFAM" id="SSF47266">
    <property type="entry name" value="4-helical cytokines"/>
    <property type="match status" value="1"/>
</dbReference>
<dbReference type="PROSITE" id="PS00254">
    <property type="entry name" value="INTERLEUKIN_6"/>
    <property type="match status" value="1"/>
</dbReference>
<keyword id="KW-0011">Acute phase</keyword>
<keyword id="KW-0202">Cytokine</keyword>
<keyword id="KW-1015">Disulfide bond</keyword>
<keyword id="KW-0325">Glycoprotein</keyword>
<keyword id="KW-0339">Growth factor</keyword>
<keyword id="KW-0597">Phosphoprotein</keyword>
<keyword id="KW-1185">Reference proteome</keyword>
<keyword id="KW-0964">Secreted</keyword>
<keyword id="KW-0732">Signal</keyword>
<reference key="1">
    <citation type="journal article" date="1992" name="DNA Seq.">
        <title>Nucleotide sequence of bovine interleukin-6 cDNA.</title>
        <authorList>
            <person name="Droogmans L."/>
            <person name="Cludts I."/>
            <person name="Cleuter Y."/>
            <person name="Kettmann R."/>
            <person name="Burny A."/>
        </authorList>
    </citation>
    <scope>NUCLEOTIDE SEQUENCE [MRNA]</scope>
    <source>
        <strain>Holstein</strain>
    </source>
</reference>
<reference key="2">
    <citation type="submission" date="2007-11" db="EMBL/GenBank/DDBJ databases">
        <title>U.S. veterinary immune reagent network: expressed bovine gene sequences.</title>
        <authorList>
            <consortium name="U.S. Veterinary Immune Reagent Network"/>
            <person name="Hudgens T."/>
            <person name="Tompkins D."/>
            <person name="Baldwin C.L."/>
        </authorList>
    </citation>
    <scope>NUCLEOTIDE SEQUENCE [LARGE SCALE MRNA]</scope>
    <source>
        <strain>Belted Galloway</strain>
        <tissue>Peripheral blood</tissue>
    </source>
</reference>
<reference key="3">
    <citation type="submission" date="2006-09" db="EMBL/GenBank/DDBJ databases">
        <authorList>
            <consortium name="NIH - Mammalian Gene Collection (MGC) project"/>
        </authorList>
    </citation>
    <scope>NUCLEOTIDE SEQUENCE [LARGE SCALE MRNA]</scope>
    <source>
        <strain>Hereford</strain>
        <tissue>Placenta</tissue>
    </source>
</reference>
<name>IL6_BOVIN</name>
<evidence type="ECO:0000250" key="1"/>
<evidence type="ECO:0000250" key="2">
    <source>
        <dbReference type="UniProtKB" id="P05231"/>
    </source>
</evidence>
<evidence type="ECO:0000250" key="3">
    <source>
        <dbReference type="UniProtKB" id="P08505"/>
    </source>
</evidence>
<evidence type="ECO:0000255" key="4"/>
<evidence type="ECO:0000305" key="5"/>
<gene>
    <name type="primary">IL6</name>
</gene>
<organism>
    <name type="scientific">Bos taurus</name>
    <name type="common">Bovine</name>
    <dbReference type="NCBI Taxonomy" id="9913"/>
    <lineage>
        <taxon>Eukaryota</taxon>
        <taxon>Metazoa</taxon>
        <taxon>Chordata</taxon>
        <taxon>Craniata</taxon>
        <taxon>Vertebrata</taxon>
        <taxon>Euteleostomi</taxon>
        <taxon>Mammalia</taxon>
        <taxon>Eutheria</taxon>
        <taxon>Laurasiatheria</taxon>
        <taxon>Artiodactyla</taxon>
        <taxon>Ruminantia</taxon>
        <taxon>Pecora</taxon>
        <taxon>Bovidae</taxon>
        <taxon>Bovinae</taxon>
        <taxon>Bos</taxon>
    </lineage>
</organism>
<protein>
    <recommendedName>
        <fullName>Interleukin-6</fullName>
        <shortName>IL-6</shortName>
    </recommendedName>
</protein>
<feature type="signal peptide" evidence="1">
    <location>
        <begin position="1"/>
        <end position="29"/>
    </location>
</feature>
<feature type="chain" id="PRO_0000015573" description="Interleukin-6">
    <location>
        <begin position="30"/>
        <end position="208"/>
    </location>
</feature>
<feature type="modified residue" description="Phosphoserine" evidence="2">
    <location>
        <position position="81"/>
    </location>
</feature>
<feature type="glycosylation site" description="N-linked (GlcNAc...) asparagine" evidence="4">
    <location>
        <position position="38"/>
    </location>
</feature>
<feature type="disulfide bond" evidence="1">
    <location>
        <begin position="72"/>
        <end position="78"/>
    </location>
</feature>
<feature type="disulfide bond" evidence="1">
    <location>
        <begin position="101"/>
        <end position="111"/>
    </location>
</feature>
<accession>P26892</accession>
<accession>A9QWQ9</accession>
<accession>Q08DT2</accession>